<comment type="function">
    <text evidence="1 2">DNA/RNA-binding protein that plays a role in various cellular processes such as transcription regulation, RNA splicing, RNA transport, DNA repair and damage response. Binds to ssRNA containing the consensus sequence 5'-AGGUAA-3' (By similarity). Binds to nascent pre-mRNAs and acts as a molecular mediator between RNA polymerase II and U1 small nuclear ribonucleoprotein thereby coupling transcription and splicing. Also binds its own pre-mRNA and autoregulates its expression; this autoregulation mechanism is mediated by non-sense-mediated decay. Plays a role in DNA repair mechanisms by promoting D-loop formation and homologous recombination during DNA double-strand break repair (By similarity). In neuronal cells, plays crucial roles in dendritic spine formation and stability, RNA transport, mRNA stability and synaptic homeostasis (By similarity).</text>
</comment>
<comment type="subunit">
    <text evidence="1">Self-oligomerizes (via N-terminal region). Oligomerization is essential for chromatin binding. Component of nuclear riboprotein complexes. Interacts with ILF3, TDRD3 and SF1. Interacts through its C-terminus with SFRS13A. Interacts with OTUB1 and SARNP. Interacts with LRSAM1. Interacts with SAFB1 in a DNA-dependent manner; this interaction tethers FUS to chromatin. Interacts with MATR3. Interacts with SNRNP70 and POLR2A; these interactions couple RNA transcription and splicing. Interacts (through its RNA-binding domain) with RALY (through its RNA-binding domain); both are components of the same RNPs.</text>
</comment>
<comment type="subcellular location">
    <subcellularLocation>
        <location evidence="1">Nucleus</location>
    </subcellularLocation>
    <text evidence="1">Displays a punctate pattern inside the nucleus and is excluded from nucleoli.</text>
</comment>
<comment type="domain">
    <text evidence="6">The C-terminal domain binds carbohydrates.</text>
</comment>
<comment type="PTM">
    <text evidence="1">Phosphorylated in its N-terminal serine residues upon induced DNA damage. ATM and DNA-PK are able to phosphorylate FUS N-terminal region.</text>
</comment>
<comment type="similarity">
    <text evidence="7">Belongs to the RRM TET family.</text>
</comment>
<feature type="chain" id="PRO_0000081590" description="RNA-binding protein FUS">
    <location>
        <begin position="1"/>
        <end position="513"/>
    </location>
</feature>
<feature type="domain" description="RRM" evidence="3">
    <location>
        <begin position="272"/>
        <end position="358"/>
    </location>
</feature>
<feature type="zinc finger region" description="RanBP2-type" evidence="4">
    <location>
        <begin position="409"/>
        <end position="440"/>
    </location>
</feature>
<feature type="region of interest" description="Disordered" evidence="5">
    <location>
        <begin position="1"/>
        <end position="273"/>
    </location>
</feature>
<feature type="region of interest" description="Disordered" evidence="5">
    <location>
        <begin position="362"/>
        <end position="411"/>
    </location>
</feature>
<feature type="region of interest" description="Disordered" evidence="5">
    <location>
        <begin position="431"/>
        <end position="513"/>
    </location>
</feature>
<feature type="compositionally biased region" description="Polar residues" evidence="5">
    <location>
        <begin position="1"/>
        <end position="14"/>
    </location>
</feature>
<feature type="compositionally biased region" description="Low complexity" evidence="5">
    <location>
        <begin position="20"/>
        <end position="36"/>
    </location>
</feature>
<feature type="compositionally biased region" description="Low complexity" evidence="5">
    <location>
        <begin position="43"/>
        <end position="63"/>
    </location>
</feature>
<feature type="compositionally biased region" description="Low complexity" evidence="5">
    <location>
        <begin position="84"/>
        <end position="124"/>
    </location>
</feature>
<feature type="compositionally biased region" description="Gly residues" evidence="5">
    <location>
        <begin position="125"/>
        <end position="139"/>
    </location>
</feature>
<feature type="compositionally biased region" description="Low complexity" evidence="5">
    <location>
        <begin position="140"/>
        <end position="164"/>
    </location>
</feature>
<feature type="compositionally biased region" description="Gly residues" evidence="5">
    <location>
        <begin position="165"/>
        <end position="176"/>
    </location>
</feature>
<feature type="compositionally biased region" description="Gly residues" evidence="5">
    <location>
        <begin position="185"/>
        <end position="219"/>
    </location>
</feature>
<feature type="compositionally biased region" description="Gly residues" evidence="5">
    <location>
        <begin position="231"/>
        <end position="246"/>
    </location>
</feature>
<feature type="compositionally biased region" description="Gly residues" evidence="5">
    <location>
        <begin position="364"/>
        <end position="408"/>
    </location>
</feature>
<feature type="compositionally biased region" description="Gly residues" evidence="5">
    <location>
        <begin position="441"/>
        <end position="455"/>
    </location>
</feature>
<feature type="compositionally biased region" description="Basic and acidic residues" evidence="5">
    <location>
        <begin position="456"/>
        <end position="480"/>
    </location>
</feature>
<feature type="compositionally biased region" description="Gly residues" evidence="5">
    <location>
        <begin position="481"/>
        <end position="495"/>
    </location>
</feature>
<feature type="compositionally biased region" description="Basic and acidic residues" evidence="5">
    <location>
        <begin position="498"/>
        <end position="513"/>
    </location>
</feature>
<feature type="modified residue" description="Asymmetric dimethylarginine; alternate" evidence="1">
    <location>
        <position position="211"/>
    </location>
</feature>
<feature type="modified residue" description="Omega-N-methylarginine; alternate" evidence="1">
    <location>
        <position position="211"/>
    </location>
</feature>
<feature type="modified residue" description="Asymmetric dimethylarginine; alternate" evidence="1">
    <location>
        <position position="213"/>
    </location>
</feature>
<feature type="modified residue" description="Omega-N-methylarginine; alternate" evidence="1">
    <location>
        <position position="213"/>
    </location>
</feature>
<feature type="modified residue" description="Asymmetric dimethylarginine" evidence="1">
    <location>
        <position position="229"/>
    </location>
</feature>
<feature type="modified residue" description="Asymmetric dimethylarginine" evidence="1">
    <location>
        <position position="231"/>
    </location>
</feature>
<feature type="modified residue" description="Asymmetric dimethylarginine" evidence="1">
    <location>
        <position position="235"/>
    </location>
</feature>
<feature type="modified residue" description="Asymmetric dimethylarginine" evidence="1">
    <location>
        <position position="238"/>
    </location>
</feature>
<feature type="modified residue" description="Asymmetric dimethylarginine" evidence="1">
    <location>
        <position position="246"/>
    </location>
</feature>
<feature type="modified residue" description="Phosphoserine" evidence="1">
    <location>
        <position position="264"/>
    </location>
</feature>
<feature type="modified residue" description="Phosphothreonine" evidence="1">
    <location>
        <position position="273"/>
    </location>
</feature>
<feature type="modified residue" description="Phosphoserine" evidence="1">
    <location>
        <position position="327"/>
    </location>
</feature>
<feature type="modified residue" description="Asymmetric dimethylarginine" evidence="1">
    <location>
        <position position="364"/>
    </location>
</feature>
<feature type="modified residue" description="Asymmetric dimethylarginine" evidence="1">
    <location>
        <position position="370"/>
    </location>
</feature>
<feature type="modified residue" description="Asymmetric dimethylarginine" evidence="1">
    <location>
        <position position="373"/>
    </location>
</feature>
<feature type="modified residue" description="Asymmetric dimethylarginine" evidence="1">
    <location>
        <position position="375"/>
    </location>
</feature>
<feature type="modified residue" description="Asymmetric dimethylarginine" evidence="1">
    <location>
        <position position="381"/>
    </location>
</feature>
<feature type="modified residue" description="Asymmetric dimethylarginine; alternate" evidence="1">
    <location>
        <position position="394"/>
    </location>
</feature>
<feature type="modified residue" description="Omega-N-methylarginine; alternate" evidence="2">
    <location>
        <position position="394"/>
    </location>
</feature>
<feature type="modified residue" description="Asymmetric dimethylarginine" evidence="1">
    <location>
        <position position="460"/>
    </location>
</feature>
<feature type="modified residue" description="Asymmetric dimethylarginine" evidence="1">
    <location>
        <position position="463"/>
    </location>
</feature>
<feature type="modified residue" description="Asymmetric dimethylarginine" evidence="1">
    <location>
        <position position="468"/>
    </location>
</feature>
<feature type="modified residue" description="Asymmetric dimethylarginine" evidence="1">
    <location>
        <position position="472"/>
    </location>
</feature>
<feature type="modified residue" description="Asymmetric dimethylarginine" evidence="1">
    <location>
        <position position="474"/>
    </location>
</feature>
<feature type="modified residue" description="Asymmetric dimethylarginine" evidence="1">
    <location>
        <position position="478"/>
    </location>
</feature>
<feature type="modified residue" description="Asymmetric dimethylarginine" evidence="1">
    <location>
        <position position="482"/>
    </location>
</feature>
<feature type="modified residue" description="Asymmetric dimethylarginine" evidence="1">
    <location>
        <position position="485"/>
    </location>
</feature>
<feature type="modified residue" description="Asymmetric dimethylarginine; alternate" evidence="1">
    <location>
        <position position="490"/>
    </location>
</feature>
<feature type="modified residue" description="Omega-N-methylarginine; alternate" evidence="1">
    <location>
        <position position="490"/>
    </location>
</feature>
<feature type="cross-link" description="Glycyl lysine isopeptide (Lys-Gly) (interchain with G-Cter in SUMO2)" evidence="1">
    <location>
        <position position="321"/>
    </location>
</feature>
<feature type="sequence conflict" description="In Ref. 1; AAC13543." evidence="7" ref="1">
    <original>TG</original>
    <variation>S</variation>
    <location>
        <begin position="65"/>
        <end position="66"/>
    </location>
</feature>
<feature type="sequence conflict" description="In Ref. 1; AAC13543." evidence="7" ref="1">
    <original>S</original>
    <variation>G</variation>
    <location>
        <position position="77"/>
    </location>
</feature>
<feature type="sequence conflict" description="In Ref. 1; AAC13543." evidence="7" ref="1">
    <original>G</original>
    <variation>S</variation>
    <location>
        <position position="109"/>
    </location>
</feature>
<gene>
    <name type="primary">FUS</name>
</gene>
<proteinExistence type="evidence at transcript level"/>
<evidence type="ECO:0000250" key="1">
    <source>
        <dbReference type="UniProtKB" id="P35637"/>
    </source>
</evidence>
<evidence type="ECO:0000250" key="2">
    <source>
        <dbReference type="UniProtKB" id="P56959"/>
    </source>
</evidence>
<evidence type="ECO:0000255" key="3">
    <source>
        <dbReference type="PROSITE-ProRule" id="PRU00176"/>
    </source>
</evidence>
<evidence type="ECO:0000255" key="4">
    <source>
        <dbReference type="PROSITE-ProRule" id="PRU00322"/>
    </source>
</evidence>
<evidence type="ECO:0000256" key="5">
    <source>
        <dbReference type="SAM" id="MobiDB-lite"/>
    </source>
</evidence>
<evidence type="ECO:0000269" key="6">
    <source>
    </source>
</evidence>
<evidence type="ECO:0000305" key="7"/>
<keyword id="KW-0238">DNA-binding</keyword>
<keyword id="KW-1017">Isopeptide bond</keyword>
<keyword id="KW-0479">Metal-binding</keyword>
<keyword id="KW-0488">Methylation</keyword>
<keyword id="KW-0539">Nucleus</keyword>
<keyword id="KW-0597">Phosphoprotein</keyword>
<keyword id="KW-1185">Reference proteome</keyword>
<keyword id="KW-0677">Repeat</keyword>
<keyword id="KW-0694">RNA-binding</keyword>
<keyword id="KW-0832">Ubl conjugation</keyword>
<keyword id="KW-0862">Zinc</keyword>
<keyword id="KW-0863">Zinc-finger</keyword>
<protein>
    <recommendedName>
        <fullName>RNA-binding protein FUS</fullName>
    </recommendedName>
    <alternativeName>
        <fullName>Protein pigpen</fullName>
    </alternativeName>
</protein>
<organism>
    <name type="scientific">Bos taurus</name>
    <name type="common">Bovine</name>
    <dbReference type="NCBI Taxonomy" id="9913"/>
    <lineage>
        <taxon>Eukaryota</taxon>
        <taxon>Metazoa</taxon>
        <taxon>Chordata</taxon>
        <taxon>Craniata</taxon>
        <taxon>Vertebrata</taxon>
        <taxon>Euteleostomi</taxon>
        <taxon>Mammalia</taxon>
        <taxon>Eutheria</taxon>
        <taxon>Laurasiatheria</taxon>
        <taxon>Artiodactyla</taxon>
        <taxon>Ruminantia</taxon>
        <taxon>Pecora</taxon>
        <taxon>Bovidae</taxon>
        <taxon>Bovinae</taxon>
        <taxon>Bos</taxon>
    </lineage>
</organism>
<sequence>MASNDYTQQATQSYGAYPTQPGQGYSQQSNQPYGQQSYGGYGQSTDTSGYGQSSYSGSYGQTQNTGYSTQSAPQGYSSAGGYGSSQSSQSSYGQQSSYPGYGQQPAPSGTSGSYGSSSQSSGYGQPQGGGYGQQSGYGGQQQSYGQQQSYNPPQGYGQQSQYNSSGGGGGGGGGSYGQDQPSMSSGGGGGGYGNQDQSGGYGGGQQDRGGRGRGGGGGYNRSSGGYEPRGRGGGRGGRGGMGGSDRGGFNKFGGPRDQGSRHDSEQDNSDNNTIFVQGLGENVTIESVADYFKQIGIIKTNKKTGQPMINLYTDRETGKLKGEATVSFDDPPSAKAAIDWFDGKEFSGNPIKVSFATRRADFNRGGGNGRGGRGRGGPMGRGGYGGGGSGGGGRGGFPSGGGGGGGQQRAGDWKCPNPTCENMNFSWRNECNQCKAPKPDGPGGGPGGSHMGGNYGDDRRGGRGGYDRGGYRGRGGDRGGFRGGRGGGDRGGFGPGKMDSRGEHRQDRRERPY</sequence>
<accession>Q28009</accession>
<accession>Q0P5J2</accession>
<name>FUS_BOVIN</name>
<reference key="1">
    <citation type="journal article" date="1996" name="Dev. Biol.">
        <title>A nuclear protein regulated during the transition from active to quiescent phenotype in cultured endothelial cells.</title>
        <authorList>
            <person name="Alliegro M.C."/>
            <person name="Alliegro M.A."/>
        </authorList>
    </citation>
    <scope>NUCLEOTIDE SEQUENCE [MRNA]</scope>
    <source>
        <tissue>Aorta</tissue>
    </source>
</reference>
<reference key="2">
    <citation type="submission" date="2006-08" db="EMBL/GenBank/DDBJ databases">
        <authorList>
            <consortium name="NIH - Mammalian Gene Collection (MGC) project"/>
        </authorList>
    </citation>
    <scope>NUCLEOTIDE SEQUENCE [LARGE SCALE MRNA]</scope>
    <source>
        <strain>Hereford</strain>
        <tissue>Basal ganglia</tissue>
    </source>
</reference>
<reference key="3">
    <citation type="journal article" date="2000" name="Exp. Cell Res.">
        <title>A C-terminal carbohydrate-binding domain in the endothelial cell regulatory protein, pigpen: new function for an EWS family member.</title>
        <authorList>
            <person name="Alliegro M.C."/>
        </authorList>
    </citation>
    <scope>DOMAIN</scope>
</reference>
<dbReference type="EMBL" id="U26024">
    <property type="protein sequence ID" value="AAC13543.1"/>
    <property type="molecule type" value="mRNA"/>
</dbReference>
<dbReference type="EMBL" id="BC119965">
    <property type="protein sequence ID" value="AAI19966.1"/>
    <property type="molecule type" value="mRNA"/>
</dbReference>
<dbReference type="RefSeq" id="NP_776337.1">
    <property type="nucleotide sequence ID" value="NM_173912.2"/>
</dbReference>
<dbReference type="RefSeq" id="XP_005224884.2">
    <property type="nucleotide sequence ID" value="XM_005224827.5"/>
</dbReference>
<dbReference type="BMRB" id="Q28009"/>
<dbReference type="SMR" id="Q28009"/>
<dbReference type="FunCoup" id="Q28009">
    <property type="interactions" value="2418"/>
</dbReference>
<dbReference type="STRING" id="9913.ENSBTAP00000007571"/>
<dbReference type="PaxDb" id="9913-ENSBTAP00000007571"/>
<dbReference type="PeptideAtlas" id="Q28009"/>
<dbReference type="GeneID" id="280796"/>
<dbReference type="KEGG" id="bta:280796"/>
<dbReference type="CTD" id="2521"/>
<dbReference type="eggNOG" id="KOG1995">
    <property type="taxonomic scope" value="Eukaryota"/>
</dbReference>
<dbReference type="HOGENOM" id="CLU_025609_2_0_1"/>
<dbReference type="InParanoid" id="Q28009"/>
<dbReference type="OrthoDB" id="76445at2759"/>
<dbReference type="TreeFam" id="TF322599"/>
<dbReference type="CD-CODE" id="D7FE2080">
    <property type="entry name" value="Nucleolus"/>
</dbReference>
<dbReference type="Proteomes" id="UP000009136">
    <property type="component" value="Unplaced"/>
</dbReference>
<dbReference type="GO" id="GO:0005737">
    <property type="term" value="C:cytoplasm"/>
    <property type="evidence" value="ECO:0000250"/>
    <property type="project" value="AgBase"/>
</dbReference>
<dbReference type="GO" id="GO:0005634">
    <property type="term" value="C:nucleus"/>
    <property type="evidence" value="ECO:0000250"/>
    <property type="project" value="AgBase"/>
</dbReference>
<dbReference type="GO" id="GO:0003677">
    <property type="term" value="F:DNA binding"/>
    <property type="evidence" value="ECO:0007669"/>
    <property type="project" value="UniProtKB-KW"/>
</dbReference>
<dbReference type="GO" id="GO:0003723">
    <property type="term" value="F:RNA binding"/>
    <property type="evidence" value="ECO:0000318"/>
    <property type="project" value="GO_Central"/>
</dbReference>
<dbReference type="GO" id="GO:0003712">
    <property type="term" value="F:transcription coregulator activity"/>
    <property type="evidence" value="ECO:0000318"/>
    <property type="project" value="GO_Central"/>
</dbReference>
<dbReference type="GO" id="GO:0008270">
    <property type="term" value="F:zinc ion binding"/>
    <property type="evidence" value="ECO:0007669"/>
    <property type="project" value="UniProtKB-KW"/>
</dbReference>
<dbReference type="GO" id="GO:0006355">
    <property type="term" value="P:regulation of DNA-templated transcription"/>
    <property type="evidence" value="ECO:0007669"/>
    <property type="project" value="InterPro"/>
</dbReference>
<dbReference type="CDD" id="cd12535">
    <property type="entry name" value="RRM_FUS_TAF15"/>
    <property type="match status" value="1"/>
</dbReference>
<dbReference type="FunFam" id="4.10.1060.10:FF:000002">
    <property type="entry name" value="RNA-binding protein EWS isoform 1"/>
    <property type="match status" value="1"/>
</dbReference>
<dbReference type="FunFam" id="3.30.70.330:FF:000242">
    <property type="entry name" value="RNA-binding protein FUS isoform X1"/>
    <property type="match status" value="1"/>
</dbReference>
<dbReference type="Gene3D" id="3.30.70.330">
    <property type="match status" value="1"/>
</dbReference>
<dbReference type="Gene3D" id="4.10.1060.10">
    <property type="entry name" value="Zinc finger, RanBP2-type"/>
    <property type="match status" value="1"/>
</dbReference>
<dbReference type="InterPro" id="IPR012677">
    <property type="entry name" value="Nucleotide-bd_a/b_plait_sf"/>
</dbReference>
<dbReference type="InterPro" id="IPR035979">
    <property type="entry name" value="RBD_domain_sf"/>
</dbReference>
<dbReference type="InterPro" id="IPR000504">
    <property type="entry name" value="RRM_dom"/>
</dbReference>
<dbReference type="InterPro" id="IPR034870">
    <property type="entry name" value="TET_fam"/>
</dbReference>
<dbReference type="InterPro" id="IPR001876">
    <property type="entry name" value="Znf_RanBP2"/>
</dbReference>
<dbReference type="InterPro" id="IPR036443">
    <property type="entry name" value="Znf_RanBP2_sf"/>
</dbReference>
<dbReference type="PANTHER" id="PTHR23238">
    <property type="entry name" value="RNA BINDING PROTEIN"/>
    <property type="match status" value="1"/>
</dbReference>
<dbReference type="Pfam" id="PF00076">
    <property type="entry name" value="RRM_1"/>
    <property type="match status" value="1"/>
</dbReference>
<dbReference type="Pfam" id="PF00641">
    <property type="entry name" value="Zn_ribbon_RanBP"/>
    <property type="match status" value="1"/>
</dbReference>
<dbReference type="SMART" id="SM00360">
    <property type="entry name" value="RRM"/>
    <property type="match status" value="1"/>
</dbReference>
<dbReference type="SMART" id="SM00547">
    <property type="entry name" value="ZnF_RBZ"/>
    <property type="match status" value="1"/>
</dbReference>
<dbReference type="SUPFAM" id="SSF90209">
    <property type="entry name" value="Ran binding protein zinc finger-like"/>
    <property type="match status" value="1"/>
</dbReference>
<dbReference type="SUPFAM" id="SSF54928">
    <property type="entry name" value="RNA-binding domain, RBD"/>
    <property type="match status" value="1"/>
</dbReference>
<dbReference type="PROSITE" id="PS50102">
    <property type="entry name" value="RRM"/>
    <property type="match status" value="1"/>
</dbReference>
<dbReference type="PROSITE" id="PS01358">
    <property type="entry name" value="ZF_RANBP2_1"/>
    <property type="match status" value="1"/>
</dbReference>
<dbReference type="PROSITE" id="PS50199">
    <property type="entry name" value="ZF_RANBP2_2"/>
    <property type="match status" value="1"/>
</dbReference>